<sequence length="332" mass="36909">MLALGKLLDLTLAGREPTEKIQLTADGTRLHWLAEGALEVTPIGARDNGVDLLLSAGIHGNETAPIELLERLIRKVAAGTLKPAARVLFLFGNPEAIRRGERYVEQDMNRLFNGRHEEGSGNEAFRAAELERLAQVFFSKTERVHLHYDLHTAIRGSKIEQFALYPWAEGRQHSRSELARLRDAGIEAVLLQNKPGITFSAYTYGQLGAEAFTLELGKARPFGENQEVNLERLERSLELLIDGSEEQPDGSRLDGLKLFSVSREVIKHSDHFRLHLDDDVANFTELSPGYLLAEDIGGTRWVVDEVGARIIFPNPRVKNGLRAGILVVPAKL</sequence>
<feature type="chain" id="PRO_1000133636" description="Succinylglutamate desuccinylase">
    <location>
        <begin position="1"/>
        <end position="332"/>
    </location>
</feature>
<feature type="active site" evidence="1">
    <location>
        <position position="215"/>
    </location>
</feature>
<feature type="binding site" evidence="1">
    <location>
        <position position="59"/>
    </location>
    <ligand>
        <name>Zn(2+)</name>
        <dbReference type="ChEBI" id="CHEBI:29105"/>
    </ligand>
</feature>
<feature type="binding site" evidence="1">
    <location>
        <position position="62"/>
    </location>
    <ligand>
        <name>Zn(2+)</name>
        <dbReference type="ChEBI" id="CHEBI:29105"/>
    </ligand>
</feature>
<feature type="binding site" evidence="1">
    <location>
        <position position="151"/>
    </location>
    <ligand>
        <name>Zn(2+)</name>
        <dbReference type="ChEBI" id="CHEBI:29105"/>
    </ligand>
</feature>
<accession>B7UY33</accession>
<comment type="function">
    <text evidence="1">Transforms N(2)-succinylglutamate into succinate and glutamate.</text>
</comment>
<comment type="catalytic activity">
    <reaction evidence="1">
        <text>N-succinyl-L-glutamate + H2O = L-glutamate + succinate</text>
        <dbReference type="Rhea" id="RHEA:15169"/>
        <dbReference type="ChEBI" id="CHEBI:15377"/>
        <dbReference type="ChEBI" id="CHEBI:29985"/>
        <dbReference type="ChEBI" id="CHEBI:30031"/>
        <dbReference type="ChEBI" id="CHEBI:58763"/>
        <dbReference type="EC" id="3.5.1.96"/>
    </reaction>
</comment>
<comment type="cofactor">
    <cofactor evidence="1">
        <name>Zn(2+)</name>
        <dbReference type="ChEBI" id="CHEBI:29105"/>
    </cofactor>
    <text evidence="1">Binds 1 zinc ion per subunit.</text>
</comment>
<comment type="pathway">
    <text evidence="1">Amino-acid degradation; L-arginine degradation via AST pathway; L-glutamate and succinate from L-arginine: step 5/5.</text>
</comment>
<comment type="similarity">
    <text evidence="1">Belongs to the AspA/AstE family. Succinylglutamate desuccinylase subfamily.</text>
</comment>
<proteinExistence type="inferred from homology"/>
<reference key="1">
    <citation type="journal article" date="2009" name="Genome Res.">
        <title>Newly introduced genomic prophage islands are critical determinants of in vivo competitiveness in the Liverpool epidemic strain of Pseudomonas aeruginosa.</title>
        <authorList>
            <person name="Winstanley C."/>
            <person name="Langille M.G.I."/>
            <person name="Fothergill J.L."/>
            <person name="Kukavica-Ibrulj I."/>
            <person name="Paradis-Bleau C."/>
            <person name="Sanschagrin F."/>
            <person name="Thomson N.R."/>
            <person name="Winsor G.L."/>
            <person name="Quail M.A."/>
            <person name="Lennard N."/>
            <person name="Bignell A."/>
            <person name="Clarke L."/>
            <person name="Seeger K."/>
            <person name="Saunders D."/>
            <person name="Harris D."/>
            <person name="Parkhill J."/>
            <person name="Hancock R.E.W."/>
            <person name="Brinkman F.S.L."/>
            <person name="Levesque R.C."/>
        </authorList>
    </citation>
    <scope>NUCLEOTIDE SEQUENCE [LARGE SCALE GENOMIC DNA]</scope>
    <source>
        <strain>LESB58</strain>
    </source>
</reference>
<gene>
    <name evidence="1" type="primary">astE</name>
    <name type="ordered locus">PLES_44151</name>
</gene>
<keyword id="KW-0056">Arginine metabolism</keyword>
<keyword id="KW-0378">Hydrolase</keyword>
<keyword id="KW-0479">Metal-binding</keyword>
<keyword id="KW-0862">Zinc</keyword>
<name>ASTE_PSEA8</name>
<evidence type="ECO:0000255" key="1">
    <source>
        <dbReference type="HAMAP-Rule" id="MF_00767"/>
    </source>
</evidence>
<protein>
    <recommendedName>
        <fullName evidence="1">Succinylglutamate desuccinylase</fullName>
        <ecNumber evidence="1">3.5.1.96</ecNumber>
    </recommendedName>
</protein>
<organism>
    <name type="scientific">Pseudomonas aeruginosa (strain LESB58)</name>
    <dbReference type="NCBI Taxonomy" id="557722"/>
    <lineage>
        <taxon>Bacteria</taxon>
        <taxon>Pseudomonadati</taxon>
        <taxon>Pseudomonadota</taxon>
        <taxon>Gammaproteobacteria</taxon>
        <taxon>Pseudomonadales</taxon>
        <taxon>Pseudomonadaceae</taxon>
        <taxon>Pseudomonas</taxon>
    </lineage>
</organism>
<dbReference type="EC" id="3.5.1.96" evidence="1"/>
<dbReference type="EMBL" id="FM209186">
    <property type="protein sequence ID" value="CAW29170.1"/>
    <property type="molecule type" value="Genomic_DNA"/>
</dbReference>
<dbReference type="RefSeq" id="WP_003112605.1">
    <property type="nucleotide sequence ID" value="NC_011770.1"/>
</dbReference>
<dbReference type="SMR" id="B7UY33"/>
<dbReference type="KEGG" id="pag:PLES_44151"/>
<dbReference type="HOGENOM" id="CLU_071608_0_0_6"/>
<dbReference type="UniPathway" id="UPA00185">
    <property type="reaction ID" value="UER00283"/>
</dbReference>
<dbReference type="GO" id="GO:0016788">
    <property type="term" value="F:hydrolase activity, acting on ester bonds"/>
    <property type="evidence" value="ECO:0007669"/>
    <property type="project" value="UniProtKB-UniRule"/>
</dbReference>
<dbReference type="GO" id="GO:0009017">
    <property type="term" value="F:succinylglutamate desuccinylase activity"/>
    <property type="evidence" value="ECO:0007669"/>
    <property type="project" value="UniProtKB-EC"/>
</dbReference>
<dbReference type="GO" id="GO:0008270">
    <property type="term" value="F:zinc ion binding"/>
    <property type="evidence" value="ECO:0007669"/>
    <property type="project" value="UniProtKB-UniRule"/>
</dbReference>
<dbReference type="GO" id="GO:0019544">
    <property type="term" value="P:arginine catabolic process to glutamate"/>
    <property type="evidence" value="ECO:0007669"/>
    <property type="project" value="UniProtKB-UniRule"/>
</dbReference>
<dbReference type="GO" id="GO:0019545">
    <property type="term" value="P:arginine catabolic process to succinate"/>
    <property type="evidence" value="ECO:0007669"/>
    <property type="project" value="UniProtKB-UniRule"/>
</dbReference>
<dbReference type="CDD" id="cd03855">
    <property type="entry name" value="M14_ASTE"/>
    <property type="match status" value="1"/>
</dbReference>
<dbReference type="FunFam" id="3.40.630.10:FF:000017">
    <property type="entry name" value="Succinylglutamate desuccinylase"/>
    <property type="match status" value="1"/>
</dbReference>
<dbReference type="Gene3D" id="3.40.630.10">
    <property type="entry name" value="Zn peptidases"/>
    <property type="match status" value="1"/>
</dbReference>
<dbReference type="HAMAP" id="MF_00767">
    <property type="entry name" value="Arg_catab_AstE"/>
    <property type="match status" value="1"/>
</dbReference>
<dbReference type="InterPro" id="IPR050178">
    <property type="entry name" value="AspA/AstE_fam"/>
</dbReference>
<dbReference type="InterPro" id="IPR055438">
    <property type="entry name" value="AstE_AspA_cat"/>
</dbReference>
<dbReference type="InterPro" id="IPR007036">
    <property type="entry name" value="Aste_AspA_hybrid_dom"/>
</dbReference>
<dbReference type="InterPro" id="IPR016681">
    <property type="entry name" value="SuccinylGlu_desuccinylase"/>
</dbReference>
<dbReference type="NCBIfam" id="TIGR03242">
    <property type="entry name" value="arg_catab_astE"/>
    <property type="match status" value="1"/>
</dbReference>
<dbReference type="NCBIfam" id="NF003706">
    <property type="entry name" value="PRK05324.1"/>
    <property type="match status" value="1"/>
</dbReference>
<dbReference type="PANTHER" id="PTHR15162">
    <property type="entry name" value="ASPARTOACYLASE"/>
    <property type="match status" value="1"/>
</dbReference>
<dbReference type="PANTHER" id="PTHR15162:SF7">
    <property type="entry name" value="SUCCINYLGLUTAMATE DESUCCINYLASE"/>
    <property type="match status" value="1"/>
</dbReference>
<dbReference type="Pfam" id="PF24827">
    <property type="entry name" value="AstE_AspA_cat"/>
    <property type="match status" value="1"/>
</dbReference>
<dbReference type="Pfam" id="PF04952">
    <property type="entry name" value="AstE_AspA_hybrid"/>
    <property type="match status" value="1"/>
</dbReference>
<dbReference type="PIRSF" id="PIRSF017020">
    <property type="entry name" value="AstE"/>
    <property type="match status" value="1"/>
</dbReference>
<dbReference type="SUPFAM" id="SSF53187">
    <property type="entry name" value="Zn-dependent exopeptidases"/>
    <property type="match status" value="1"/>
</dbReference>